<sequence length="222" mass="24887">MESVLNNEKAIVVFSGGQDSTTCLFYAKKHFKEVELVTFNYGQRHDTEIEVAKQIAQDQGMKHHVLDMSLLSQLTPNALTQHDMEITNNEDGIPNTFVPARNLLFLSFAGALAYQIGAKHIITGVCETDFSGYPDCRDSFIKSMNVTLSLAMDKDFVIHTPLMWLNKAETWKLSDELEVLDYIRTKTLTCYNGIIGDGCGECPACHLRQRGLNQYLESKGAL</sequence>
<comment type="function">
    <text evidence="1">Catalyzes the ATP-dependent conversion of 7-carboxy-7-deazaguanine (CDG) to 7-cyano-7-deazaguanine (preQ(0)).</text>
</comment>
<comment type="catalytic activity">
    <reaction evidence="1">
        <text>7-carboxy-7-deazaguanine + NH4(+) + ATP = 7-cyano-7-deazaguanine + ADP + phosphate + H2O + H(+)</text>
        <dbReference type="Rhea" id="RHEA:27982"/>
        <dbReference type="ChEBI" id="CHEBI:15377"/>
        <dbReference type="ChEBI" id="CHEBI:15378"/>
        <dbReference type="ChEBI" id="CHEBI:28938"/>
        <dbReference type="ChEBI" id="CHEBI:30616"/>
        <dbReference type="ChEBI" id="CHEBI:43474"/>
        <dbReference type="ChEBI" id="CHEBI:45075"/>
        <dbReference type="ChEBI" id="CHEBI:61036"/>
        <dbReference type="ChEBI" id="CHEBI:456216"/>
        <dbReference type="EC" id="6.3.4.20"/>
    </reaction>
</comment>
<comment type="cofactor">
    <cofactor evidence="1">
        <name>Zn(2+)</name>
        <dbReference type="ChEBI" id="CHEBI:29105"/>
    </cofactor>
    <text evidence="1">Binds 1 zinc ion per subunit.</text>
</comment>
<comment type="pathway">
    <text evidence="1">Purine metabolism; 7-cyano-7-deazaguanine biosynthesis.</text>
</comment>
<comment type="subunit">
    <text evidence="1">Homodimer.</text>
</comment>
<comment type="similarity">
    <text evidence="1">Belongs to the QueC family.</text>
</comment>
<organism>
    <name type="scientific">Staphylococcus aureus (strain MSSA476)</name>
    <dbReference type="NCBI Taxonomy" id="282459"/>
    <lineage>
        <taxon>Bacteria</taxon>
        <taxon>Bacillati</taxon>
        <taxon>Bacillota</taxon>
        <taxon>Bacilli</taxon>
        <taxon>Bacillales</taxon>
        <taxon>Staphylococcaceae</taxon>
        <taxon>Staphylococcus</taxon>
    </lineage>
</organism>
<protein>
    <recommendedName>
        <fullName evidence="1">7-cyano-7-deazaguanine synthase</fullName>
        <ecNumber evidence="1">6.3.4.20</ecNumber>
    </recommendedName>
    <alternativeName>
        <fullName evidence="1">7-cyano-7-carbaguanine synthase</fullName>
    </alternativeName>
    <alternativeName>
        <fullName evidence="1">PreQ(0) synthase</fullName>
    </alternativeName>
    <alternativeName>
        <fullName evidence="1">Queuosine biosynthesis protein QueC</fullName>
    </alternativeName>
</protein>
<dbReference type="EC" id="6.3.4.20" evidence="1"/>
<dbReference type="EMBL" id="BX571857">
    <property type="protein sequence ID" value="CAG42453.1"/>
    <property type="molecule type" value="Genomic_DNA"/>
</dbReference>
<dbReference type="RefSeq" id="WP_000446724.1">
    <property type="nucleotide sequence ID" value="NC_002953.3"/>
</dbReference>
<dbReference type="SMR" id="Q6GBB8"/>
<dbReference type="KEGG" id="sas:SAS0677"/>
<dbReference type="HOGENOM" id="CLU_081854_0_0_9"/>
<dbReference type="UniPathway" id="UPA00391"/>
<dbReference type="GO" id="GO:0005524">
    <property type="term" value="F:ATP binding"/>
    <property type="evidence" value="ECO:0007669"/>
    <property type="project" value="UniProtKB-UniRule"/>
</dbReference>
<dbReference type="GO" id="GO:0016879">
    <property type="term" value="F:ligase activity, forming carbon-nitrogen bonds"/>
    <property type="evidence" value="ECO:0007669"/>
    <property type="project" value="UniProtKB-UniRule"/>
</dbReference>
<dbReference type="GO" id="GO:0008270">
    <property type="term" value="F:zinc ion binding"/>
    <property type="evidence" value="ECO:0007669"/>
    <property type="project" value="UniProtKB-UniRule"/>
</dbReference>
<dbReference type="GO" id="GO:0008616">
    <property type="term" value="P:queuosine biosynthetic process"/>
    <property type="evidence" value="ECO:0007669"/>
    <property type="project" value="UniProtKB-UniRule"/>
</dbReference>
<dbReference type="CDD" id="cd01995">
    <property type="entry name" value="QueC-like"/>
    <property type="match status" value="1"/>
</dbReference>
<dbReference type="FunFam" id="3.40.50.620:FF:000017">
    <property type="entry name" value="7-cyano-7-deazaguanine synthase"/>
    <property type="match status" value="1"/>
</dbReference>
<dbReference type="Gene3D" id="3.40.50.620">
    <property type="entry name" value="HUPs"/>
    <property type="match status" value="1"/>
</dbReference>
<dbReference type="HAMAP" id="MF_01633">
    <property type="entry name" value="QueC"/>
    <property type="match status" value="1"/>
</dbReference>
<dbReference type="InterPro" id="IPR018317">
    <property type="entry name" value="QueC"/>
</dbReference>
<dbReference type="InterPro" id="IPR014729">
    <property type="entry name" value="Rossmann-like_a/b/a_fold"/>
</dbReference>
<dbReference type="NCBIfam" id="TIGR00364">
    <property type="entry name" value="7-cyano-7-deazaguanine synthase QueC"/>
    <property type="match status" value="1"/>
</dbReference>
<dbReference type="PANTHER" id="PTHR42914">
    <property type="entry name" value="7-CYANO-7-DEAZAGUANINE SYNTHASE"/>
    <property type="match status" value="1"/>
</dbReference>
<dbReference type="PANTHER" id="PTHR42914:SF1">
    <property type="entry name" value="7-CYANO-7-DEAZAGUANINE SYNTHASE"/>
    <property type="match status" value="1"/>
</dbReference>
<dbReference type="Pfam" id="PF06508">
    <property type="entry name" value="QueC"/>
    <property type="match status" value="1"/>
</dbReference>
<dbReference type="PIRSF" id="PIRSF006293">
    <property type="entry name" value="ExsB"/>
    <property type="match status" value="1"/>
</dbReference>
<dbReference type="SUPFAM" id="SSF52402">
    <property type="entry name" value="Adenine nucleotide alpha hydrolases-like"/>
    <property type="match status" value="1"/>
</dbReference>
<feature type="chain" id="PRO_0000246931" description="7-cyano-7-deazaguanine synthase">
    <location>
        <begin position="1"/>
        <end position="222"/>
    </location>
</feature>
<feature type="binding site" evidence="1">
    <location>
        <begin position="14"/>
        <end position="24"/>
    </location>
    <ligand>
        <name>ATP</name>
        <dbReference type="ChEBI" id="CHEBI:30616"/>
    </ligand>
</feature>
<feature type="binding site" evidence="1">
    <location>
        <position position="190"/>
    </location>
    <ligand>
        <name>Zn(2+)</name>
        <dbReference type="ChEBI" id="CHEBI:29105"/>
    </ligand>
</feature>
<feature type="binding site" evidence="1">
    <location>
        <position position="199"/>
    </location>
    <ligand>
        <name>Zn(2+)</name>
        <dbReference type="ChEBI" id="CHEBI:29105"/>
    </ligand>
</feature>
<feature type="binding site" evidence="1">
    <location>
        <position position="202"/>
    </location>
    <ligand>
        <name>Zn(2+)</name>
        <dbReference type="ChEBI" id="CHEBI:29105"/>
    </ligand>
</feature>
<feature type="binding site" evidence="1">
    <location>
        <position position="205"/>
    </location>
    <ligand>
        <name>Zn(2+)</name>
        <dbReference type="ChEBI" id="CHEBI:29105"/>
    </ligand>
</feature>
<accession>Q6GBB8</accession>
<name>QUEC_STAAS</name>
<keyword id="KW-0067">ATP-binding</keyword>
<keyword id="KW-0436">Ligase</keyword>
<keyword id="KW-0479">Metal-binding</keyword>
<keyword id="KW-0547">Nucleotide-binding</keyword>
<keyword id="KW-0671">Queuosine biosynthesis</keyword>
<keyword id="KW-0862">Zinc</keyword>
<reference key="1">
    <citation type="journal article" date="2004" name="Proc. Natl. Acad. Sci. U.S.A.">
        <title>Complete genomes of two clinical Staphylococcus aureus strains: evidence for the rapid evolution of virulence and drug resistance.</title>
        <authorList>
            <person name="Holden M.T.G."/>
            <person name="Feil E.J."/>
            <person name="Lindsay J.A."/>
            <person name="Peacock S.J."/>
            <person name="Day N.P.J."/>
            <person name="Enright M.C."/>
            <person name="Foster T.J."/>
            <person name="Moore C.E."/>
            <person name="Hurst L."/>
            <person name="Atkin R."/>
            <person name="Barron A."/>
            <person name="Bason N."/>
            <person name="Bentley S.D."/>
            <person name="Chillingworth C."/>
            <person name="Chillingworth T."/>
            <person name="Churcher C."/>
            <person name="Clark L."/>
            <person name="Corton C."/>
            <person name="Cronin A."/>
            <person name="Doggett J."/>
            <person name="Dowd L."/>
            <person name="Feltwell T."/>
            <person name="Hance Z."/>
            <person name="Harris B."/>
            <person name="Hauser H."/>
            <person name="Holroyd S."/>
            <person name="Jagels K."/>
            <person name="James K.D."/>
            <person name="Lennard N."/>
            <person name="Line A."/>
            <person name="Mayes R."/>
            <person name="Moule S."/>
            <person name="Mungall K."/>
            <person name="Ormond D."/>
            <person name="Quail M.A."/>
            <person name="Rabbinowitsch E."/>
            <person name="Rutherford K.M."/>
            <person name="Sanders M."/>
            <person name="Sharp S."/>
            <person name="Simmonds M."/>
            <person name="Stevens K."/>
            <person name="Whitehead S."/>
            <person name="Barrell B.G."/>
            <person name="Spratt B.G."/>
            <person name="Parkhill J."/>
        </authorList>
    </citation>
    <scope>NUCLEOTIDE SEQUENCE [LARGE SCALE GENOMIC DNA]</scope>
    <source>
        <strain>MSSA476</strain>
    </source>
</reference>
<proteinExistence type="inferred from homology"/>
<gene>
    <name evidence="1" type="primary">queC</name>
    <name type="ordered locus">SAS0677</name>
</gene>
<evidence type="ECO:0000255" key="1">
    <source>
        <dbReference type="HAMAP-Rule" id="MF_01633"/>
    </source>
</evidence>